<dbReference type="EMBL" id="X64617">
    <property type="protein sequence ID" value="CAA45900.1"/>
    <property type="molecule type" value="Genomic_DNA"/>
</dbReference>
<dbReference type="EMBL" id="X64614">
    <property type="protein sequence ID" value="CAA45894.1"/>
    <property type="molecule type" value="Genomic_DNA"/>
</dbReference>
<dbReference type="SMR" id="P31565"/>
<dbReference type="GO" id="GO:0009535">
    <property type="term" value="C:chloroplast thylakoid membrane"/>
    <property type="evidence" value="ECO:0007669"/>
    <property type="project" value="UniProtKB-SubCell"/>
</dbReference>
<dbReference type="GO" id="GO:0005886">
    <property type="term" value="C:plasma membrane"/>
    <property type="evidence" value="ECO:0007669"/>
    <property type="project" value="TreeGrafter"/>
</dbReference>
<dbReference type="GO" id="GO:0020037">
    <property type="term" value="F:heme binding"/>
    <property type="evidence" value="ECO:0007669"/>
    <property type="project" value="InterPro"/>
</dbReference>
<dbReference type="GO" id="GO:0017004">
    <property type="term" value="P:cytochrome complex assembly"/>
    <property type="evidence" value="ECO:0007669"/>
    <property type="project" value="UniProtKB-KW"/>
</dbReference>
<dbReference type="InterPro" id="IPR002541">
    <property type="entry name" value="Cyt_c_assembly"/>
</dbReference>
<dbReference type="InterPro" id="IPR045062">
    <property type="entry name" value="Cyt_c_biogenesis_CcsA/CcmC"/>
</dbReference>
<dbReference type="PANTHER" id="PTHR30071:SF1">
    <property type="entry name" value="CYTOCHROME B_B6 PROTEIN-RELATED"/>
    <property type="match status" value="1"/>
</dbReference>
<dbReference type="PANTHER" id="PTHR30071">
    <property type="entry name" value="HEME EXPORTER PROTEIN C"/>
    <property type="match status" value="1"/>
</dbReference>
<dbReference type="Pfam" id="PF01578">
    <property type="entry name" value="Cytochrom_C_asm"/>
    <property type="match status" value="1"/>
</dbReference>
<feature type="chain" id="PRO_0000201610" description="Cytochrome c biogenesis protein CcsA">
    <location>
        <begin position="1" status="less than"/>
        <end position="65"/>
    </location>
</feature>
<feature type="transmembrane region" description="Helical" evidence="2">
    <location>
        <begin position="5"/>
        <end position="19"/>
    </location>
</feature>
<feature type="transmembrane region" description="Helical" evidence="2">
    <location>
        <begin position="32"/>
        <end position="52"/>
    </location>
</feature>
<feature type="non-terminal residue">
    <location>
        <position position="1"/>
    </location>
</feature>
<reference key="1">
    <citation type="journal article" date="1993" name="Curr. Genet.">
        <title>In-frame length mutations associated with short tandem repeats are located in unassigned open reading frames of Oenothera chloroplast DNA.</title>
        <authorList>
            <person name="Nimzyk R."/>
            <person name="Schoendorf T."/>
            <person name="Hachtel W."/>
        </authorList>
    </citation>
    <scope>NUCLEOTIDE SEQUENCE [GENOMIC DNA]</scope>
</reference>
<name>CCSA_OENBE</name>
<proteinExistence type="inferred from homology"/>
<gene>
    <name type="primary">ccsA</name>
</gene>
<comment type="function">
    <text evidence="1">Required during biogenesis of c-type cytochromes (cytochrome c6 and cytochrome f) at the step of heme attachment.</text>
</comment>
<comment type="subunit">
    <text evidence="1">May interact with Ccs1.</text>
</comment>
<comment type="subcellular location">
    <subcellularLocation>
        <location evidence="1">Plastid</location>
        <location evidence="1">Chloroplast thylakoid membrane</location>
        <topology evidence="1">Multi-pass membrane protein</topology>
    </subcellularLocation>
</comment>
<comment type="similarity">
    <text evidence="3">Belongs to the CcmF/CycK/Ccl1/NrfE/CcsA family.</text>
</comment>
<keyword id="KW-0150">Chloroplast</keyword>
<keyword id="KW-0201">Cytochrome c-type biogenesis</keyword>
<keyword id="KW-0472">Membrane</keyword>
<keyword id="KW-0934">Plastid</keyword>
<keyword id="KW-0793">Thylakoid</keyword>
<keyword id="KW-0812">Transmembrane</keyword>
<keyword id="KW-1133">Transmembrane helix</keyword>
<evidence type="ECO:0000250" key="1"/>
<evidence type="ECO:0000255" key="2"/>
<evidence type="ECO:0000305" key="3"/>
<organism>
    <name type="scientific">Oenothera berteroana</name>
    <name type="common">Bertero's evening primrose</name>
    <dbReference type="NCBI Taxonomy" id="3950"/>
    <lineage>
        <taxon>Eukaryota</taxon>
        <taxon>Viridiplantae</taxon>
        <taxon>Streptophyta</taxon>
        <taxon>Embryophyta</taxon>
        <taxon>Tracheophyta</taxon>
        <taxon>Spermatophyta</taxon>
        <taxon>Magnoliopsida</taxon>
        <taxon>eudicotyledons</taxon>
        <taxon>Gunneridae</taxon>
        <taxon>Pentapetalae</taxon>
        <taxon>rosids</taxon>
        <taxon>malvids</taxon>
        <taxon>Myrtales</taxon>
        <taxon>Onagraceae</taxon>
        <taxon>Onagroideae</taxon>
        <taxon>Onagreae</taxon>
        <taxon>Oenothera</taxon>
    </lineage>
</organism>
<accession>P31565</accession>
<sequence>DPKETWAFITWTMFAIYLHTRTNPNFQSANSAIVAFLGFIIIWICYFGVNLLGIGLHSYGSFNLH</sequence>
<protein>
    <recommendedName>
        <fullName>Cytochrome c biogenesis protein CcsA</fullName>
    </recommendedName>
</protein>
<geneLocation type="chloroplast"/>